<sequence>MKDWLDEIKWNSDGLVPAIAQDHKTGRVLMMAWMNRESLALTATEQRAIYWSRSRGKLWRKGEESGHVQKLHELRLDCDADVIILMVEQLGHIACHTGRESCFYRVYEDGQWKIVDPVLKDPDAIYSAGH</sequence>
<dbReference type="EC" id="3.5.4.19" evidence="1"/>
<dbReference type="EMBL" id="CP000926">
    <property type="protein sequence ID" value="ABZ00949.1"/>
    <property type="molecule type" value="Genomic_DNA"/>
</dbReference>
<dbReference type="RefSeq" id="WP_012274571.1">
    <property type="nucleotide sequence ID" value="NC_010322.1"/>
</dbReference>
<dbReference type="SMR" id="B0KM39"/>
<dbReference type="KEGG" id="ppg:PputGB1_5064"/>
<dbReference type="eggNOG" id="COG0139">
    <property type="taxonomic scope" value="Bacteria"/>
</dbReference>
<dbReference type="HOGENOM" id="CLU_048577_5_0_6"/>
<dbReference type="UniPathway" id="UPA00031">
    <property type="reaction ID" value="UER00008"/>
</dbReference>
<dbReference type="Proteomes" id="UP000002157">
    <property type="component" value="Chromosome"/>
</dbReference>
<dbReference type="GO" id="GO:0005737">
    <property type="term" value="C:cytoplasm"/>
    <property type="evidence" value="ECO:0007669"/>
    <property type="project" value="UniProtKB-SubCell"/>
</dbReference>
<dbReference type="GO" id="GO:0000287">
    <property type="term" value="F:magnesium ion binding"/>
    <property type="evidence" value="ECO:0007669"/>
    <property type="project" value="UniProtKB-UniRule"/>
</dbReference>
<dbReference type="GO" id="GO:0004635">
    <property type="term" value="F:phosphoribosyl-AMP cyclohydrolase activity"/>
    <property type="evidence" value="ECO:0007669"/>
    <property type="project" value="UniProtKB-UniRule"/>
</dbReference>
<dbReference type="GO" id="GO:0008270">
    <property type="term" value="F:zinc ion binding"/>
    <property type="evidence" value="ECO:0007669"/>
    <property type="project" value="UniProtKB-UniRule"/>
</dbReference>
<dbReference type="GO" id="GO:0000105">
    <property type="term" value="P:L-histidine biosynthetic process"/>
    <property type="evidence" value="ECO:0007669"/>
    <property type="project" value="UniProtKB-UniRule"/>
</dbReference>
<dbReference type="FunFam" id="3.10.20.810:FF:000001">
    <property type="entry name" value="Histidine biosynthesis bifunctional protein HisIE"/>
    <property type="match status" value="1"/>
</dbReference>
<dbReference type="Gene3D" id="3.10.20.810">
    <property type="entry name" value="Phosphoribosyl-AMP cyclohydrolase"/>
    <property type="match status" value="1"/>
</dbReference>
<dbReference type="HAMAP" id="MF_01021">
    <property type="entry name" value="HisI"/>
    <property type="match status" value="1"/>
</dbReference>
<dbReference type="InterPro" id="IPR026660">
    <property type="entry name" value="PRA-CH"/>
</dbReference>
<dbReference type="InterPro" id="IPR002496">
    <property type="entry name" value="PRib_AMP_CycHydrolase_dom"/>
</dbReference>
<dbReference type="InterPro" id="IPR038019">
    <property type="entry name" value="PRib_AMP_CycHydrolase_sf"/>
</dbReference>
<dbReference type="NCBIfam" id="NF000768">
    <property type="entry name" value="PRK00051.1"/>
    <property type="match status" value="1"/>
</dbReference>
<dbReference type="PANTHER" id="PTHR42945">
    <property type="entry name" value="HISTIDINE BIOSYNTHESIS BIFUNCTIONAL PROTEIN"/>
    <property type="match status" value="1"/>
</dbReference>
<dbReference type="PANTHER" id="PTHR42945:SF1">
    <property type="entry name" value="HISTIDINE BIOSYNTHESIS BIFUNCTIONAL PROTEIN HIS7"/>
    <property type="match status" value="1"/>
</dbReference>
<dbReference type="Pfam" id="PF01502">
    <property type="entry name" value="PRA-CH"/>
    <property type="match status" value="1"/>
</dbReference>
<dbReference type="SUPFAM" id="SSF141734">
    <property type="entry name" value="HisI-like"/>
    <property type="match status" value="1"/>
</dbReference>
<name>HIS3_PSEPG</name>
<keyword id="KW-0028">Amino-acid biosynthesis</keyword>
<keyword id="KW-0963">Cytoplasm</keyword>
<keyword id="KW-0368">Histidine biosynthesis</keyword>
<keyword id="KW-0378">Hydrolase</keyword>
<keyword id="KW-0460">Magnesium</keyword>
<keyword id="KW-0479">Metal-binding</keyword>
<keyword id="KW-0862">Zinc</keyword>
<reference key="1">
    <citation type="submission" date="2008-01" db="EMBL/GenBank/DDBJ databases">
        <title>Complete sequence of Pseudomonas putida GB-1.</title>
        <authorList>
            <consortium name="US DOE Joint Genome Institute"/>
            <person name="Copeland A."/>
            <person name="Lucas S."/>
            <person name="Lapidus A."/>
            <person name="Barry K."/>
            <person name="Glavina del Rio T."/>
            <person name="Dalin E."/>
            <person name="Tice H."/>
            <person name="Pitluck S."/>
            <person name="Bruce D."/>
            <person name="Goodwin L."/>
            <person name="Chertkov O."/>
            <person name="Brettin T."/>
            <person name="Detter J.C."/>
            <person name="Han C."/>
            <person name="Kuske C.R."/>
            <person name="Schmutz J."/>
            <person name="Larimer F."/>
            <person name="Land M."/>
            <person name="Hauser L."/>
            <person name="Kyrpides N."/>
            <person name="Kim E."/>
            <person name="McCarthy J.K."/>
            <person name="Richardson P."/>
        </authorList>
    </citation>
    <scope>NUCLEOTIDE SEQUENCE [LARGE SCALE GENOMIC DNA]</scope>
    <source>
        <strain>GB-1</strain>
    </source>
</reference>
<protein>
    <recommendedName>
        <fullName evidence="1">Phosphoribosyl-AMP cyclohydrolase</fullName>
        <shortName evidence="1">PRA-CH</shortName>
        <ecNumber evidence="1">3.5.4.19</ecNumber>
    </recommendedName>
</protein>
<organism>
    <name type="scientific">Pseudomonas putida (strain GB-1)</name>
    <dbReference type="NCBI Taxonomy" id="76869"/>
    <lineage>
        <taxon>Bacteria</taxon>
        <taxon>Pseudomonadati</taxon>
        <taxon>Pseudomonadota</taxon>
        <taxon>Gammaproteobacteria</taxon>
        <taxon>Pseudomonadales</taxon>
        <taxon>Pseudomonadaceae</taxon>
        <taxon>Pseudomonas</taxon>
    </lineage>
</organism>
<comment type="function">
    <text evidence="1">Catalyzes the hydrolysis of the adenine ring of phosphoribosyl-AMP.</text>
</comment>
<comment type="catalytic activity">
    <reaction evidence="1">
        <text>1-(5-phospho-beta-D-ribosyl)-5'-AMP + H2O = 1-(5-phospho-beta-D-ribosyl)-5-[(5-phospho-beta-D-ribosylamino)methylideneamino]imidazole-4-carboxamide</text>
        <dbReference type="Rhea" id="RHEA:20049"/>
        <dbReference type="ChEBI" id="CHEBI:15377"/>
        <dbReference type="ChEBI" id="CHEBI:58435"/>
        <dbReference type="ChEBI" id="CHEBI:59457"/>
        <dbReference type="EC" id="3.5.4.19"/>
    </reaction>
</comment>
<comment type="cofactor">
    <cofactor evidence="1">
        <name>Mg(2+)</name>
        <dbReference type="ChEBI" id="CHEBI:18420"/>
    </cofactor>
    <text evidence="1">Binds 1 Mg(2+) ion per subunit.</text>
</comment>
<comment type="cofactor">
    <cofactor evidence="1">
        <name>Zn(2+)</name>
        <dbReference type="ChEBI" id="CHEBI:29105"/>
    </cofactor>
    <text evidence="1">Binds 1 zinc ion per subunit.</text>
</comment>
<comment type="pathway">
    <text evidence="1">Amino-acid biosynthesis; L-histidine biosynthesis; L-histidine from 5-phospho-alpha-D-ribose 1-diphosphate: step 3/9.</text>
</comment>
<comment type="subunit">
    <text evidence="1">Homodimer.</text>
</comment>
<comment type="subcellular location">
    <subcellularLocation>
        <location evidence="1">Cytoplasm</location>
    </subcellularLocation>
</comment>
<comment type="similarity">
    <text evidence="1">Belongs to the PRA-CH family.</text>
</comment>
<evidence type="ECO:0000255" key="1">
    <source>
        <dbReference type="HAMAP-Rule" id="MF_01021"/>
    </source>
</evidence>
<gene>
    <name evidence="1" type="primary">hisI</name>
    <name type="ordered locus">PputGB1_5064</name>
</gene>
<accession>B0KM39</accession>
<proteinExistence type="inferred from homology"/>
<feature type="chain" id="PRO_1000084184" description="Phosphoribosyl-AMP cyclohydrolase">
    <location>
        <begin position="1"/>
        <end position="130"/>
    </location>
</feature>
<feature type="binding site" evidence="1">
    <location>
        <position position="77"/>
    </location>
    <ligand>
        <name>Mg(2+)</name>
        <dbReference type="ChEBI" id="CHEBI:18420"/>
    </ligand>
</feature>
<feature type="binding site" evidence="1">
    <location>
        <position position="78"/>
    </location>
    <ligand>
        <name>Zn(2+)</name>
        <dbReference type="ChEBI" id="CHEBI:29105"/>
        <note>ligand shared between dimeric partners</note>
    </ligand>
</feature>
<feature type="binding site" evidence="1">
    <location>
        <position position="79"/>
    </location>
    <ligand>
        <name>Mg(2+)</name>
        <dbReference type="ChEBI" id="CHEBI:18420"/>
    </ligand>
</feature>
<feature type="binding site" evidence="1">
    <location>
        <position position="81"/>
    </location>
    <ligand>
        <name>Mg(2+)</name>
        <dbReference type="ChEBI" id="CHEBI:18420"/>
    </ligand>
</feature>
<feature type="binding site" evidence="1">
    <location>
        <position position="95"/>
    </location>
    <ligand>
        <name>Zn(2+)</name>
        <dbReference type="ChEBI" id="CHEBI:29105"/>
        <note>ligand shared between dimeric partners</note>
    </ligand>
</feature>
<feature type="binding site" evidence="1">
    <location>
        <position position="102"/>
    </location>
    <ligand>
        <name>Zn(2+)</name>
        <dbReference type="ChEBI" id="CHEBI:29105"/>
        <note>ligand shared between dimeric partners</note>
    </ligand>
</feature>